<keyword id="KW-1185">Reference proteome</keyword>
<protein>
    <recommendedName>
        <fullName>Putative uncharacterized protein DDB_G0286343</fullName>
    </recommendedName>
</protein>
<dbReference type="EMBL" id="AAFI02000085">
    <property type="protein sequence ID" value="EAL64347.1"/>
    <property type="molecule type" value="Genomic_DNA"/>
</dbReference>
<dbReference type="RefSeq" id="XP_637839.1">
    <property type="nucleotide sequence ID" value="XM_632747.1"/>
</dbReference>
<dbReference type="SMR" id="Q54LZ2"/>
<dbReference type="PaxDb" id="44689-DDB0218805"/>
<dbReference type="EnsemblProtists" id="EAL64347">
    <property type="protein sequence ID" value="EAL64347"/>
    <property type="gene ID" value="DDB_G0286343"/>
</dbReference>
<dbReference type="GeneID" id="8625553"/>
<dbReference type="KEGG" id="ddi:DDB_G0286343"/>
<dbReference type="dictyBase" id="DDB_G0286343"/>
<dbReference type="VEuPathDB" id="AmoebaDB:DDB_G0286343"/>
<dbReference type="HOGENOM" id="CLU_3261624_0_0_1"/>
<dbReference type="InParanoid" id="Q54LZ2"/>
<dbReference type="PRO" id="PR:Q54LZ2"/>
<dbReference type="Proteomes" id="UP000002195">
    <property type="component" value="Chromosome 4"/>
</dbReference>
<proteinExistence type="predicted"/>
<organism>
    <name type="scientific">Dictyostelium discoideum</name>
    <name type="common">Social amoeba</name>
    <dbReference type="NCBI Taxonomy" id="44689"/>
    <lineage>
        <taxon>Eukaryota</taxon>
        <taxon>Amoebozoa</taxon>
        <taxon>Evosea</taxon>
        <taxon>Eumycetozoa</taxon>
        <taxon>Dictyostelia</taxon>
        <taxon>Dictyosteliales</taxon>
        <taxon>Dictyosteliaceae</taxon>
        <taxon>Dictyostelium</taxon>
    </lineage>
</organism>
<feature type="chain" id="PRO_0000348528" description="Putative uncharacterized protein DDB_G0286343">
    <location>
        <begin position="1"/>
        <end position="42"/>
    </location>
</feature>
<accession>Q54LZ2</accession>
<reference key="1">
    <citation type="journal article" date="2005" name="Nature">
        <title>The genome of the social amoeba Dictyostelium discoideum.</title>
        <authorList>
            <person name="Eichinger L."/>
            <person name="Pachebat J.A."/>
            <person name="Gloeckner G."/>
            <person name="Rajandream M.A."/>
            <person name="Sucgang R."/>
            <person name="Berriman M."/>
            <person name="Song J."/>
            <person name="Olsen R."/>
            <person name="Szafranski K."/>
            <person name="Xu Q."/>
            <person name="Tunggal B."/>
            <person name="Kummerfeld S."/>
            <person name="Madera M."/>
            <person name="Konfortov B.A."/>
            <person name="Rivero F."/>
            <person name="Bankier A.T."/>
            <person name="Lehmann R."/>
            <person name="Hamlin N."/>
            <person name="Davies R."/>
            <person name="Gaudet P."/>
            <person name="Fey P."/>
            <person name="Pilcher K."/>
            <person name="Chen G."/>
            <person name="Saunders D."/>
            <person name="Sodergren E.J."/>
            <person name="Davis P."/>
            <person name="Kerhornou A."/>
            <person name="Nie X."/>
            <person name="Hall N."/>
            <person name="Anjard C."/>
            <person name="Hemphill L."/>
            <person name="Bason N."/>
            <person name="Farbrother P."/>
            <person name="Desany B."/>
            <person name="Just E."/>
            <person name="Morio T."/>
            <person name="Rost R."/>
            <person name="Churcher C.M."/>
            <person name="Cooper J."/>
            <person name="Haydock S."/>
            <person name="van Driessche N."/>
            <person name="Cronin A."/>
            <person name="Goodhead I."/>
            <person name="Muzny D.M."/>
            <person name="Mourier T."/>
            <person name="Pain A."/>
            <person name="Lu M."/>
            <person name="Harper D."/>
            <person name="Lindsay R."/>
            <person name="Hauser H."/>
            <person name="James K.D."/>
            <person name="Quiles M."/>
            <person name="Madan Babu M."/>
            <person name="Saito T."/>
            <person name="Buchrieser C."/>
            <person name="Wardroper A."/>
            <person name="Felder M."/>
            <person name="Thangavelu M."/>
            <person name="Johnson D."/>
            <person name="Knights A."/>
            <person name="Loulseged H."/>
            <person name="Mungall K.L."/>
            <person name="Oliver K."/>
            <person name="Price C."/>
            <person name="Quail M.A."/>
            <person name="Urushihara H."/>
            <person name="Hernandez J."/>
            <person name="Rabbinowitsch E."/>
            <person name="Steffen D."/>
            <person name="Sanders M."/>
            <person name="Ma J."/>
            <person name="Kohara Y."/>
            <person name="Sharp S."/>
            <person name="Simmonds M.N."/>
            <person name="Spiegler S."/>
            <person name="Tivey A."/>
            <person name="Sugano S."/>
            <person name="White B."/>
            <person name="Walker D."/>
            <person name="Woodward J.R."/>
            <person name="Winckler T."/>
            <person name="Tanaka Y."/>
            <person name="Shaulsky G."/>
            <person name="Schleicher M."/>
            <person name="Weinstock G.M."/>
            <person name="Rosenthal A."/>
            <person name="Cox E.C."/>
            <person name="Chisholm R.L."/>
            <person name="Gibbs R.A."/>
            <person name="Loomis W.F."/>
            <person name="Platzer M."/>
            <person name="Kay R.R."/>
            <person name="Williams J.G."/>
            <person name="Dear P.H."/>
            <person name="Noegel A.A."/>
            <person name="Barrell B.G."/>
            <person name="Kuspa A."/>
        </authorList>
    </citation>
    <scope>NUCLEOTIDE SEQUENCE [LARGE SCALE GENOMIC DNA]</scope>
    <source>
        <strain>AX4</strain>
    </source>
</reference>
<sequence>MEIVTEKDLKNIEEQLKSVVRDQDRFRLIKANANSFISQVNK</sequence>
<gene>
    <name type="ORF">DDB_G0286343</name>
</gene>
<name>Y8805_DICDI</name>